<feature type="chain" id="PRO_0000327089" description="Protoheme IX farnesyltransferase">
    <location>
        <begin position="1"/>
        <end position="310"/>
    </location>
</feature>
<feature type="transmembrane region" description="Helical" evidence="1">
    <location>
        <begin position="31"/>
        <end position="51"/>
    </location>
</feature>
<feature type="transmembrane region" description="Helical" evidence="1">
    <location>
        <begin position="53"/>
        <end position="73"/>
    </location>
</feature>
<feature type="transmembrane region" description="Helical" evidence="1">
    <location>
        <begin position="102"/>
        <end position="122"/>
    </location>
</feature>
<feature type="transmembrane region" description="Helical" evidence="1">
    <location>
        <begin position="124"/>
        <end position="144"/>
    </location>
</feature>
<feature type="transmembrane region" description="Helical" evidence="1">
    <location>
        <begin position="149"/>
        <end position="169"/>
    </location>
</feature>
<feature type="transmembrane region" description="Helical" evidence="1">
    <location>
        <begin position="170"/>
        <end position="190"/>
    </location>
</feature>
<feature type="transmembrane region" description="Helical" evidence="1">
    <location>
        <begin position="242"/>
        <end position="262"/>
    </location>
</feature>
<feature type="transmembrane region" description="Helical" evidence="1">
    <location>
        <begin position="289"/>
        <end position="309"/>
    </location>
</feature>
<name>COXX_MYCSS</name>
<reference key="1">
    <citation type="submission" date="2006-06" db="EMBL/GenBank/DDBJ databases">
        <title>Complete sequence of chromosome of Mycobacterium sp. MCS.</title>
        <authorList>
            <consortium name="US DOE Joint Genome Institute"/>
            <person name="Copeland A."/>
            <person name="Lucas S."/>
            <person name="Lapidus A."/>
            <person name="Barry K."/>
            <person name="Detter J.C."/>
            <person name="Glavina del Rio T."/>
            <person name="Hammon N."/>
            <person name="Israni S."/>
            <person name="Dalin E."/>
            <person name="Tice H."/>
            <person name="Pitluck S."/>
            <person name="Martinez M."/>
            <person name="Schmutz J."/>
            <person name="Larimer F."/>
            <person name="Land M."/>
            <person name="Hauser L."/>
            <person name="Kyrpides N."/>
            <person name="Kim E."/>
            <person name="Miller C.D."/>
            <person name="Hughes J.E."/>
            <person name="Anderson A.J."/>
            <person name="Sims R.C."/>
            <person name="Richardson P."/>
        </authorList>
    </citation>
    <scope>NUCLEOTIDE SEQUENCE [LARGE SCALE GENOMIC DNA]</scope>
    <source>
        <strain>MCS</strain>
    </source>
</reference>
<comment type="function">
    <text evidence="1">Converts heme B (protoheme IX) to heme O by substitution of the vinyl group on carbon 2 of heme B porphyrin ring with a hydroxyethyl farnesyl side group.</text>
</comment>
<comment type="catalytic activity">
    <reaction evidence="1">
        <text>heme b + (2E,6E)-farnesyl diphosphate + H2O = Fe(II)-heme o + diphosphate</text>
        <dbReference type="Rhea" id="RHEA:28070"/>
        <dbReference type="ChEBI" id="CHEBI:15377"/>
        <dbReference type="ChEBI" id="CHEBI:33019"/>
        <dbReference type="ChEBI" id="CHEBI:60344"/>
        <dbReference type="ChEBI" id="CHEBI:60530"/>
        <dbReference type="ChEBI" id="CHEBI:175763"/>
        <dbReference type="EC" id="2.5.1.141"/>
    </reaction>
</comment>
<comment type="pathway">
    <text evidence="1">Porphyrin-containing compound metabolism; heme O biosynthesis; heme O from protoheme: step 1/1.</text>
</comment>
<comment type="subcellular location">
    <subcellularLocation>
        <location evidence="1">Cell membrane</location>
        <topology evidence="1">Multi-pass membrane protein</topology>
    </subcellularLocation>
</comment>
<comment type="miscellaneous">
    <text evidence="1">Carbon 2 of the heme B porphyrin ring is defined according to the Fischer nomenclature.</text>
</comment>
<comment type="similarity">
    <text evidence="1">Belongs to the UbiA prenyltransferase family. Protoheme IX farnesyltransferase subfamily.</text>
</comment>
<comment type="sequence caution" evidence="2">
    <conflict type="erroneous initiation">
        <sequence resource="EMBL-CDS" id="ABG08523"/>
    </conflict>
</comment>
<proteinExistence type="inferred from homology"/>
<keyword id="KW-1003">Cell membrane</keyword>
<keyword id="KW-0350">Heme biosynthesis</keyword>
<keyword id="KW-0472">Membrane</keyword>
<keyword id="KW-0808">Transferase</keyword>
<keyword id="KW-0812">Transmembrane</keyword>
<keyword id="KW-1133">Transmembrane helix</keyword>
<evidence type="ECO:0000255" key="1">
    <source>
        <dbReference type="HAMAP-Rule" id="MF_00154"/>
    </source>
</evidence>
<evidence type="ECO:0000305" key="2"/>
<dbReference type="EC" id="2.5.1.141" evidence="1"/>
<dbReference type="EMBL" id="CP000384">
    <property type="protein sequence ID" value="ABG08523.1"/>
    <property type="status" value="ALT_INIT"/>
    <property type="molecule type" value="Genomic_DNA"/>
</dbReference>
<dbReference type="SMR" id="Q1B9B1"/>
<dbReference type="KEGG" id="mmc:Mmcs_2415"/>
<dbReference type="HOGENOM" id="CLU_029631_0_1_11"/>
<dbReference type="BioCyc" id="MSP164756:G1G6O-2466-MONOMER"/>
<dbReference type="UniPathway" id="UPA00834">
    <property type="reaction ID" value="UER00712"/>
</dbReference>
<dbReference type="GO" id="GO:0005886">
    <property type="term" value="C:plasma membrane"/>
    <property type="evidence" value="ECO:0007669"/>
    <property type="project" value="UniProtKB-SubCell"/>
</dbReference>
<dbReference type="GO" id="GO:0008495">
    <property type="term" value="F:protoheme IX farnesyltransferase activity"/>
    <property type="evidence" value="ECO:0007669"/>
    <property type="project" value="UniProtKB-UniRule"/>
</dbReference>
<dbReference type="GO" id="GO:0048034">
    <property type="term" value="P:heme O biosynthetic process"/>
    <property type="evidence" value="ECO:0007669"/>
    <property type="project" value="UniProtKB-UniRule"/>
</dbReference>
<dbReference type="CDD" id="cd13957">
    <property type="entry name" value="PT_UbiA_Cox10"/>
    <property type="match status" value="1"/>
</dbReference>
<dbReference type="FunFam" id="1.10.357.140:FF:000001">
    <property type="entry name" value="Protoheme IX farnesyltransferase"/>
    <property type="match status" value="1"/>
</dbReference>
<dbReference type="Gene3D" id="1.10.357.140">
    <property type="entry name" value="UbiA prenyltransferase"/>
    <property type="match status" value="1"/>
</dbReference>
<dbReference type="HAMAP" id="MF_00154">
    <property type="entry name" value="CyoE_CtaB"/>
    <property type="match status" value="1"/>
</dbReference>
<dbReference type="InterPro" id="IPR006369">
    <property type="entry name" value="Protohaem_IX_farnesylTrfase"/>
</dbReference>
<dbReference type="InterPro" id="IPR000537">
    <property type="entry name" value="UbiA_prenyltransferase"/>
</dbReference>
<dbReference type="InterPro" id="IPR044878">
    <property type="entry name" value="UbiA_sf"/>
</dbReference>
<dbReference type="NCBIfam" id="TIGR01473">
    <property type="entry name" value="cyoE_ctaB"/>
    <property type="match status" value="1"/>
</dbReference>
<dbReference type="NCBIfam" id="NF003349">
    <property type="entry name" value="PRK04375.1-2"/>
    <property type="match status" value="1"/>
</dbReference>
<dbReference type="PANTHER" id="PTHR43448:SF7">
    <property type="entry name" value="4-HYDROXYBENZOATE SOLANESYLTRANSFERASE"/>
    <property type="match status" value="1"/>
</dbReference>
<dbReference type="PANTHER" id="PTHR43448">
    <property type="entry name" value="PROTOHEME IX FARNESYLTRANSFERASE, MITOCHONDRIAL"/>
    <property type="match status" value="1"/>
</dbReference>
<dbReference type="Pfam" id="PF01040">
    <property type="entry name" value="UbiA"/>
    <property type="match status" value="1"/>
</dbReference>
<organism>
    <name type="scientific">Mycobacterium sp. (strain MCS)</name>
    <dbReference type="NCBI Taxonomy" id="164756"/>
    <lineage>
        <taxon>Bacteria</taxon>
        <taxon>Bacillati</taxon>
        <taxon>Actinomycetota</taxon>
        <taxon>Actinomycetes</taxon>
        <taxon>Mycobacteriales</taxon>
        <taxon>Mycobacteriaceae</taxon>
        <taxon>Mycobacterium</taxon>
    </lineage>
</organism>
<protein>
    <recommendedName>
        <fullName evidence="1">Protoheme IX farnesyltransferase</fullName>
        <ecNumber evidence="1">2.5.1.141</ecNumber>
    </recommendedName>
    <alternativeName>
        <fullName evidence="1">Heme B farnesyltransferase</fullName>
    </alternativeName>
    <alternativeName>
        <fullName evidence="1">Heme O synthase</fullName>
    </alternativeName>
</protein>
<accession>Q1B9B1</accession>
<sequence>MSIRERHLSHGAPSRIRTTVLAYLALTKPRVIELLLVTAIPAMLLADRGSVDPLLILNTLIGGMLAAAGANTLNCVADADIDKKMKRTARRPLARDTVPTRNALIFGLVLSVGSFFWLWGTSNLLSGLLAVATIAFYVFVYTLLLKRRTSQNVVWGGAAGCMPVMIGWSAVTGTIQWPALVMFAIIFFWTPPHTWALAMRYKDDYKAAGVPMLPAVATERQVTRQILIYTWLTVLTTLALALATGWLYASVAVLAGTWFLVMAHQLYNGVKRGEPVKPLRLFLQSNNYLAVVFAALAVDSVLALPTLLGS</sequence>
<gene>
    <name evidence="1" type="primary">ctaB</name>
    <name type="ordered locus">Mmcs_2415</name>
</gene>